<reference key="1">
    <citation type="journal article" date="1992" name="Virus Genes">
        <title>Nucleotide and deduced amino acid sequence of the canine adenovirus type 1 proteinase.</title>
        <authorList>
            <person name="Cai F."/>
            <person name="Weber J.M."/>
        </authorList>
    </citation>
    <scope>NUCLEOTIDE SEQUENCE [GENOMIC DNA]</scope>
</reference>
<accession>P68986</accession>
<accession>P35990</accession>
<dbReference type="EC" id="3.4.22.39" evidence="1"/>
<dbReference type="EMBL" id="M72715">
    <property type="protein sequence ID" value="AAA42529.1"/>
    <property type="molecule type" value="Genomic_DNA"/>
</dbReference>
<dbReference type="PIR" id="B48550">
    <property type="entry name" value="B48550"/>
</dbReference>
<dbReference type="RefSeq" id="AP_000060.1">
    <property type="nucleotide sequence ID" value="AC_000003.1"/>
</dbReference>
<dbReference type="SMR" id="P68986"/>
<dbReference type="MEROPS" id="C05.001"/>
<dbReference type="GO" id="GO:0042025">
    <property type="term" value="C:host cell nucleus"/>
    <property type="evidence" value="ECO:0007669"/>
    <property type="project" value="UniProtKB-SubCell"/>
</dbReference>
<dbReference type="GO" id="GO:0044423">
    <property type="term" value="C:virion component"/>
    <property type="evidence" value="ECO:0007669"/>
    <property type="project" value="UniProtKB-UniRule"/>
</dbReference>
<dbReference type="GO" id="GO:0004197">
    <property type="term" value="F:cysteine-type endopeptidase activity"/>
    <property type="evidence" value="ECO:0007669"/>
    <property type="project" value="UniProtKB-UniRule"/>
</dbReference>
<dbReference type="GO" id="GO:0003677">
    <property type="term" value="F:DNA binding"/>
    <property type="evidence" value="ECO:0007669"/>
    <property type="project" value="UniProtKB-UniRule"/>
</dbReference>
<dbReference type="GO" id="GO:0006508">
    <property type="term" value="P:proteolysis"/>
    <property type="evidence" value="ECO:0007669"/>
    <property type="project" value="UniProtKB-KW"/>
</dbReference>
<dbReference type="Gene3D" id="3.40.395.10">
    <property type="entry name" value="Adenoviral Proteinase, Chain A"/>
    <property type="match status" value="1"/>
</dbReference>
<dbReference type="HAMAP" id="MF_04059">
    <property type="entry name" value="ADV_PRO"/>
    <property type="match status" value="1"/>
</dbReference>
<dbReference type="InterPro" id="IPR038765">
    <property type="entry name" value="Papain-like_cys_pep_sf"/>
</dbReference>
<dbReference type="InterPro" id="IPR000855">
    <property type="entry name" value="Peptidase_C5"/>
</dbReference>
<dbReference type="Pfam" id="PF00770">
    <property type="entry name" value="Peptidase_C5"/>
    <property type="match status" value="1"/>
</dbReference>
<dbReference type="PIRSF" id="PIRSF001218">
    <property type="entry name" value="Protease_ADV"/>
    <property type="match status" value="1"/>
</dbReference>
<dbReference type="PRINTS" id="PR00703">
    <property type="entry name" value="ADVENDOPTASE"/>
</dbReference>
<dbReference type="SUPFAM" id="SSF54001">
    <property type="entry name" value="Cysteine proteinases"/>
    <property type="match status" value="1"/>
</dbReference>
<evidence type="ECO:0000255" key="1">
    <source>
        <dbReference type="HAMAP-Rule" id="MF_04059"/>
    </source>
</evidence>
<keyword id="KW-0068">Autocatalytic cleavage</keyword>
<keyword id="KW-1015">Disulfide bond</keyword>
<keyword id="KW-0238">DNA-binding</keyword>
<keyword id="KW-1048">Host nucleus</keyword>
<keyword id="KW-0378">Hydrolase</keyword>
<keyword id="KW-0426">Late protein</keyword>
<keyword id="KW-0645">Protease</keyword>
<keyword id="KW-0788">Thiol protease</keyword>
<keyword id="KW-0946">Virion</keyword>
<gene>
    <name evidence="1" type="primary">L3</name>
</gene>
<protein>
    <recommendedName>
        <fullName evidence="1">Protease</fullName>
        <ecNumber evidence="1">3.4.22.39</ecNumber>
    </recommendedName>
    <alternativeName>
        <fullName evidence="1">Adenain</fullName>
    </alternativeName>
    <alternativeName>
        <fullName evidence="1">Adenovirus protease</fullName>
        <shortName evidence="1">AVP</shortName>
    </alternativeName>
    <alternativeName>
        <fullName evidence="1">Adenovirus proteinase</fullName>
    </alternativeName>
    <alternativeName>
        <fullName evidence="1">Endoprotease</fullName>
    </alternativeName>
</protein>
<organismHost>
    <name type="scientific">Canis lupus familiaris</name>
    <name type="common">Dog</name>
    <name type="synonym">Canis familiaris</name>
    <dbReference type="NCBI Taxonomy" id="9615"/>
</organismHost>
<comment type="function">
    <text evidence="1">Cleaves viral precursor proteins (pTP, pIIIa, pVI, pVII, pVIII, and pX) inside newly assembled particles giving rise to mature virions. Protease complexed to its cofactor slides along the viral DNA to specifically locate and cleave the viral precursors. Mature virions have a weakened organization compared to the unmature virions, thereby facilitating subsequent uncoating. Without maturation, the particle lacks infectivity and is unable to uncoat. Late in adenovirus infection, in the cytoplasm, may participate in the cytoskeleton destruction. Cleaves host cell cytoskeletal keratins K7 and K18.</text>
</comment>
<comment type="catalytic activity">
    <reaction evidence="1">
        <text>Cleaves proteins of the adenovirus and its host cell at two consensus sites: -Yaa-Xaa-Gly-Gly-|-Xaa- and -Yaa-Xaa-Gly-Xaa-|-Gly- (in which Yaa is Met, Ile or Leu, and Xaa is any amino acid).</text>
        <dbReference type="EC" id="3.4.22.39"/>
    </reaction>
</comment>
<comment type="activity regulation">
    <text evidence="1">Requires DNA and protease cofactor for maximal activation. Inside nascent virions, becomes partially activated by binding to the viral DNA, allowing it to cleave the cofactor that binds to the protease and fully activates it. Actin, like the viral protease cofactor, seems to act as a cofactor in the cleavage of cytokeratin 18 and of actin itself.</text>
</comment>
<comment type="subunit">
    <text evidence="1">Interacts with protease cofactor pVI-C; this interaction is necessary for protease activation.</text>
</comment>
<comment type="subcellular location">
    <subcellularLocation>
        <location evidence="1">Virion</location>
    </subcellularLocation>
    <subcellularLocation>
        <location evidence="1">Host nucleus</location>
    </subcellularLocation>
    <text evidence="1">Present in about 10 copies per virion.</text>
</comment>
<comment type="induction">
    <text evidence="1">Expressed in the late phase of the viral replicative cycle.</text>
</comment>
<comment type="miscellaneous">
    <text evidence="1">All late proteins expressed from the major late promoter are produced by alternative splicing and alternative polyadenylation of the same gene giving rise to non-overlapping ORFs. A leader sequence is present in the N-terminus of all these mRNAs and is recognized by the viral shutoff protein to provide expression although conventional translation via ribosome scanning from the cap has been shut off in the host cell.</text>
</comment>
<comment type="similarity">
    <text evidence="1">Belongs to the peptidase C5 family.</text>
</comment>
<proteinExistence type="inferred from homology"/>
<organism>
    <name type="scientific">Canine adenovirus serotype 1 (strain Utrecht)</name>
    <name type="common">CAdV-1</name>
    <name type="synonym">Canine adenovirus 1 (strain Utrecht)</name>
    <dbReference type="NCBI Taxonomy" id="36364"/>
    <lineage>
        <taxon>Viruses</taxon>
        <taxon>Varidnaviria</taxon>
        <taxon>Bamfordvirae</taxon>
        <taxon>Preplasmiviricota</taxon>
        <taxon>Tectiliviricetes</taxon>
        <taxon>Rowavirales</taxon>
        <taxon>Adenoviridae</taxon>
        <taxon>Mastadenovirus</taxon>
        <taxon>Canine mastadenovirus A</taxon>
    </lineage>
</organism>
<sequence>MAEGGSSEEELRAIVRDLAVTPFFLGTFDKRFPGFISSQRITCAVVNTAGRETGGVHWLAMAWNPRSKTFYMFDPFGFSDSKLKQVYSFEYEGLLRRSAIASTPDRCVTLAKSNETIQGPNSAACGLFCCMFLHAFVNWPDNPFNHNPTMGPLKSVPNYKLYDPTVQHVLWENQEKLYKFLEKNSAYFRAHAAAIKTRTAFNKLKQ</sequence>
<feature type="chain" id="PRO_0000218040" description="Protease">
    <location>
        <begin position="1"/>
        <end position="206"/>
    </location>
</feature>
<feature type="active site" evidence="1">
    <location>
        <position position="57"/>
    </location>
</feature>
<feature type="active site" evidence="1">
    <location>
        <position position="74"/>
    </location>
</feature>
<feature type="active site" evidence="1">
    <location>
        <position position="125"/>
    </location>
</feature>
<feature type="site" description="Cleavage; by autolysis" evidence="1">
    <location>
        <begin position="54"/>
        <end position="55"/>
    </location>
</feature>
<feature type="disulfide bond" description="Interchain (with C-10 in cleaved protease cofactor pVI-C)" evidence="1">
    <location>
        <position position="107"/>
    </location>
</feature>
<name>PRO_ADECU</name>